<proteinExistence type="inferred from homology"/>
<name>BIOB_XANCP</name>
<reference key="1">
    <citation type="journal article" date="2002" name="Nature">
        <title>Comparison of the genomes of two Xanthomonas pathogens with differing host specificities.</title>
        <authorList>
            <person name="da Silva A.C.R."/>
            <person name="Ferro J.A."/>
            <person name="Reinach F.C."/>
            <person name="Farah C.S."/>
            <person name="Furlan L.R."/>
            <person name="Quaggio R.B."/>
            <person name="Monteiro-Vitorello C.B."/>
            <person name="Van Sluys M.A."/>
            <person name="Almeida N.F. Jr."/>
            <person name="Alves L.M.C."/>
            <person name="do Amaral A.M."/>
            <person name="Bertolini M.C."/>
            <person name="Camargo L.E.A."/>
            <person name="Camarotte G."/>
            <person name="Cannavan F."/>
            <person name="Cardozo J."/>
            <person name="Chambergo F."/>
            <person name="Ciapina L.P."/>
            <person name="Cicarelli R.M.B."/>
            <person name="Coutinho L.L."/>
            <person name="Cursino-Santos J.R."/>
            <person name="El-Dorry H."/>
            <person name="Faria J.B."/>
            <person name="Ferreira A.J.S."/>
            <person name="Ferreira R.C.C."/>
            <person name="Ferro M.I.T."/>
            <person name="Formighieri E.F."/>
            <person name="Franco M.C."/>
            <person name="Greggio C.C."/>
            <person name="Gruber A."/>
            <person name="Katsuyama A.M."/>
            <person name="Kishi L.T."/>
            <person name="Leite R.P."/>
            <person name="Lemos E.G.M."/>
            <person name="Lemos M.V.F."/>
            <person name="Locali E.C."/>
            <person name="Machado M.A."/>
            <person name="Madeira A.M.B.N."/>
            <person name="Martinez-Rossi N.M."/>
            <person name="Martins E.C."/>
            <person name="Meidanis J."/>
            <person name="Menck C.F.M."/>
            <person name="Miyaki C.Y."/>
            <person name="Moon D.H."/>
            <person name="Moreira L.M."/>
            <person name="Novo M.T.M."/>
            <person name="Okura V.K."/>
            <person name="Oliveira M.C."/>
            <person name="Oliveira V.R."/>
            <person name="Pereira H.A."/>
            <person name="Rossi A."/>
            <person name="Sena J.A.D."/>
            <person name="Silva C."/>
            <person name="de Souza R.F."/>
            <person name="Spinola L.A.F."/>
            <person name="Takita M.A."/>
            <person name="Tamura R.E."/>
            <person name="Teixeira E.C."/>
            <person name="Tezza R.I.D."/>
            <person name="Trindade dos Santos M."/>
            <person name="Truffi D."/>
            <person name="Tsai S.M."/>
            <person name="White F.F."/>
            <person name="Setubal J.C."/>
            <person name="Kitajima J.P."/>
        </authorList>
    </citation>
    <scope>NUCLEOTIDE SEQUENCE [LARGE SCALE GENOMIC DNA]</scope>
    <source>
        <strain>ATCC 33913 / DSM 3586 / NCPPB 528 / LMG 568 / P 25</strain>
    </source>
</reference>
<dbReference type="EC" id="2.8.1.6" evidence="1"/>
<dbReference type="EMBL" id="AE008922">
    <property type="protein sequence ID" value="AAM39707.1"/>
    <property type="molecule type" value="Genomic_DNA"/>
</dbReference>
<dbReference type="RefSeq" id="NP_635783.1">
    <property type="nucleotide sequence ID" value="NC_003902.1"/>
</dbReference>
<dbReference type="RefSeq" id="WP_011035642.1">
    <property type="nucleotide sequence ID" value="NC_003902.1"/>
</dbReference>
<dbReference type="SMR" id="Q8PDF0"/>
<dbReference type="STRING" id="190485.XCC0388"/>
<dbReference type="EnsemblBacteria" id="AAM39707">
    <property type="protein sequence ID" value="AAM39707"/>
    <property type="gene ID" value="XCC0388"/>
</dbReference>
<dbReference type="KEGG" id="xcc:XCC0388"/>
<dbReference type="PATRIC" id="fig|190485.4.peg.427"/>
<dbReference type="eggNOG" id="COG0502">
    <property type="taxonomic scope" value="Bacteria"/>
</dbReference>
<dbReference type="HOGENOM" id="CLU_033172_1_2_6"/>
<dbReference type="OrthoDB" id="9786826at2"/>
<dbReference type="UniPathway" id="UPA00078">
    <property type="reaction ID" value="UER00162"/>
</dbReference>
<dbReference type="Proteomes" id="UP000001010">
    <property type="component" value="Chromosome"/>
</dbReference>
<dbReference type="GO" id="GO:0051537">
    <property type="term" value="F:2 iron, 2 sulfur cluster binding"/>
    <property type="evidence" value="ECO:0000318"/>
    <property type="project" value="GO_Central"/>
</dbReference>
<dbReference type="GO" id="GO:0051539">
    <property type="term" value="F:4 iron, 4 sulfur cluster binding"/>
    <property type="evidence" value="ECO:0007669"/>
    <property type="project" value="UniProtKB-KW"/>
</dbReference>
<dbReference type="GO" id="GO:0004076">
    <property type="term" value="F:biotin synthase activity"/>
    <property type="evidence" value="ECO:0000318"/>
    <property type="project" value="GO_Central"/>
</dbReference>
<dbReference type="GO" id="GO:0005506">
    <property type="term" value="F:iron ion binding"/>
    <property type="evidence" value="ECO:0007669"/>
    <property type="project" value="UniProtKB-UniRule"/>
</dbReference>
<dbReference type="GO" id="GO:0009102">
    <property type="term" value="P:biotin biosynthetic process"/>
    <property type="evidence" value="ECO:0000318"/>
    <property type="project" value="GO_Central"/>
</dbReference>
<dbReference type="CDD" id="cd01335">
    <property type="entry name" value="Radical_SAM"/>
    <property type="match status" value="1"/>
</dbReference>
<dbReference type="FunFam" id="3.20.20.70:FF:000011">
    <property type="entry name" value="Biotin synthase"/>
    <property type="match status" value="1"/>
</dbReference>
<dbReference type="Gene3D" id="3.20.20.70">
    <property type="entry name" value="Aldolase class I"/>
    <property type="match status" value="1"/>
</dbReference>
<dbReference type="HAMAP" id="MF_01694">
    <property type="entry name" value="BioB"/>
    <property type="match status" value="1"/>
</dbReference>
<dbReference type="InterPro" id="IPR013785">
    <property type="entry name" value="Aldolase_TIM"/>
</dbReference>
<dbReference type="InterPro" id="IPR010722">
    <property type="entry name" value="BATS_dom"/>
</dbReference>
<dbReference type="InterPro" id="IPR002684">
    <property type="entry name" value="Biotin_synth/BioAB"/>
</dbReference>
<dbReference type="InterPro" id="IPR024177">
    <property type="entry name" value="Biotin_synthase"/>
</dbReference>
<dbReference type="InterPro" id="IPR006638">
    <property type="entry name" value="Elp3/MiaA/NifB-like_rSAM"/>
</dbReference>
<dbReference type="InterPro" id="IPR007197">
    <property type="entry name" value="rSAM"/>
</dbReference>
<dbReference type="NCBIfam" id="TIGR00433">
    <property type="entry name" value="bioB"/>
    <property type="match status" value="1"/>
</dbReference>
<dbReference type="PANTHER" id="PTHR22976">
    <property type="entry name" value="BIOTIN SYNTHASE"/>
    <property type="match status" value="1"/>
</dbReference>
<dbReference type="PANTHER" id="PTHR22976:SF2">
    <property type="entry name" value="BIOTIN SYNTHASE, MITOCHONDRIAL"/>
    <property type="match status" value="1"/>
</dbReference>
<dbReference type="Pfam" id="PF06968">
    <property type="entry name" value="BATS"/>
    <property type="match status" value="1"/>
</dbReference>
<dbReference type="Pfam" id="PF04055">
    <property type="entry name" value="Radical_SAM"/>
    <property type="match status" value="1"/>
</dbReference>
<dbReference type="PIRSF" id="PIRSF001619">
    <property type="entry name" value="Biotin_synth"/>
    <property type="match status" value="1"/>
</dbReference>
<dbReference type="SFLD" id="SFLDF00272">
    <property type="entry name" value="biotin_synthase"/>
    <property type="match status" value="1"/>
</dbReference>
<dbReference type="SFLD" id="SFLDG01278">
    <property type="entry name" value="biotin_synthase_like"/>
    <property type="match status" value="1"/>
</dbReference>
<dbReference type="SMART" id="SM00876">
    <property type="entry name" value="BATS"/>
    <property type="match status" value="1"/>
</dbReference>
<dbReference type="SMART" id="SM00729">
    <property type="entry name" value="Elp3"/>
    <property type="match status" value="1"/>
</dbReference>
<dbReference type="SUPFAM" id="SSF102114">
    <property type="entry name" value="Radical SAM enzymes"/>
    <property type="match status" value="1"/>
</dbReference>
<dbReference type="PROSITE" id="PS51918">
    <property type="entry name" value="RADICAL_SAM"/>
    <property type="match status" value="1"/>
</dbReference>
<sequence>MSVVVRHDWDRKELHALFALPFPELLHRAASVHRAHFDPAEVQVSTLLSVKTGGCPEDCAYCPQAQRYDTGVSAQKLMDTEDVVAKARQAKAAGASRFCMGAAWRSPKDRDIPKVAAMIREVKAMGLETCATLGMLDAGQARALKDAGLDYYNHNLDTAPDYYDSIIHTRQYQDRLNTLEHVRDVGLKTCCGGIVGMGETREHRVGLLHALATLPAHPDSVPINQLVQVPGTPLHGTEPLDAFEFVRMIAVARIAMPKSMVRLSAGREAMSDELQALCFLAGANSIFYGEKLLTTGNPDTERDQGLFQRLGLRPMQITVDAAEHDHPGTVHADITCGAACEHAA</sequence>
<accession>Q8PDF0</accession>
<keyword id="KW-0001">2Fe-2S</keyword>
<keyword id="KW-0004">4Fe-4S</keyword>
<keyword id="KW-0093">Biotin biosynthesis</keyword>
<keyword id="KW-0408">Iron</keyword>
<keyword id="KW-0411">Iron-sulfur</keyword>
<keyword id="KW-0479">Metal-binding</keyword>
<keyword id="KW-1185">Reference proteome</keyword>
<keyword id="KW-0949">S-adenosyl-L-methionine</keyword>
<keyword id="KW-0808">Transferase</keyword>
<protein>
    <recommendedName>
        <fullName evidence="1">Biotin synthase</fullName>
        <ecNumber evidence="1">2.8.1.6</ecNumber>
    </recommendedName>
</protein>
<feature type="chain" id="PRO_0000381710" description="Biotin synthase">
    <location>
        <begin position="1"/>
        <end position="344"/>
    </location>
</feature>
<feature type="domain" description="Radical SAM core" evidence="2">
    <location>
        <begin position="40"/>
        <end position="267"/>
    </location>
</feature>
<feature type="binding site" evidence="1">
    <location>
        <position position="55"/>
    </location>
    <ligand>
        <name>[4Fe-4S] cluster</name>
        <dbReference type="ChEBI" id="CHEBI:49883"/>
        <note>4Fe-4S-S-AdoMet</note>
    </ligand>
</feature>
<feature type="binding site" evidence="1">
    <location>
        <position position="59"/>
    </location>
    <ligand>
        <name>[4Fe-4S] cluster</name>
        <dbReference type="ChEBI" id="CHEBI:49883"/>
        <note>4Fe-4S-S-AdoMet</note>
    </ligand>
</feature>
<feature type="binding site" evidence="1">
    <location>
        <position position="62"/>
    </location>
    <ligand>
        <name>[4Fe-4S] cluster</name>
        <dbReference type="ChEBI" id="CHEBI:49883"/>
        <note>4Fe-4S-S-AdoMet</note>
    </ligand>
</feature>
<feature type="binding site" evidence="1">
    <location>
        <position position="99"/>
    </location>
    <ligand>
        <name>[2Fe-2S] cluster</name>
        <dbReference type="ChEBI" id="CHEBI:190135"/>
    </ligand>
</feature>
<feature type="binding site" evidence="1">
    <location>
        <position position="130"/>
    </location>
    <ligand>
        <name>[2Fe-2S] cluster</name>
        <dbReference type="ChEBI" id="CHEBI:190135"/>
    </ligand>
</feature>
<feature type="binding site" evidence="1">
    <location>
        <position position="190"/>
    </location>
    <ligand>
        <name>[2Fe-2S] cluster</name>
        <dbReference type="ChEBI" id="CHEBI:190135"/>
    </ligand>
</feature>
<feature type="binding site" evidence="1">
    <location>
        <position position="262"/>
    </location>
    <ligand>
        <name>[2Fe-2S] cluster</name>
        <dbReference type="ChEBI" id="CHEBI:190135"/>
    </ligand>
</feature>
<organism>
    <name type="scientific">Xanthomonas campestris pv. campestris (strain ATCC 33913 / DSM 3586 / NCPPB 528 / LMG 568 / P 25)</name>
    <dbReference type="NCBI Taxonomy" id="190485"/>
    <lineage>
        <taxon>Bacteria</taxon>
        <taxon>Pseudomonadati</taxon>
        <taxon>Pseudomonadota</taxon>
        <taxon>Gammaproteobacteria</taxon>
        <taxon>Lysobacterales</taxon>
        <taxon>Lysobacteraceae</taxon>
        <taxon>Xanthomonas</taxon>
    </lineage>
</organism>
<comment type="function">
    <text evidence="1">Catalyzes the conversion of dethiobiotin (DTB) to biotin by the insertion of a sulfur atom into dethiobiotin via a radical-based mechanism.</text>
</comment>
<comment type="catalytic activity">
    <reaction evidence="1">
        <text>(4R,5S)-dethiobiotin + (sulfur carrier)-SH + 2 reduced [2Fe-2S]-[ferredoxin] + 2 S-adenosyl-L-methionine = (sulfur carrier)-H + biotin + 2 5'-deoxyadenosine + 2 L-methionine + 2 oxidized [2Fe-2S]-[ferredoxin]</text>
        <dbReference type="Rhea" id="RHEA:22060"/>
        <dbReference type="Rhea" id="RHEA-COMP:10000"/>
        <dbReference type="Rhea" id="RHEA-COMP:10001"/>
        <dbReference type="Rhea" id="RHEA-COMP:14737"/>
        <dbReference type="Rhea" id="RHEA-COMP:14739"/>
        <dbReference type="ChEBI" id="CHEBI:17319"/>
        <dbReference type="ChEBI" id="CHEBI:29917"/>
        <dbReference type="ChEBI" id="CHEBI:33737"/>
        <dbReference type="ChEBI" id="CHEBI:33738"/>
        <dbReference type="ChEBI" id="CHEBI:57586"/>
        <dbReference type="ChEBI" id="CHEBI:57844"/>
        <dbReference type="ChEBI" id="CHEBI:59789"/>
        <dbReference type="ChEBI" id="CHEBI:64428"/>
        <dbReference type="ChEBI" id="CHEBI:149473"/>
        <dbReference type="EC" id="2.8.1.6"/>
    </reaction>
</comment>
<comment type="cofactor">
    <cofactor evidence="1">
        <name>[4Fe-4S] cluster</name>
        <dbReference type="ChEBI" id="CHEBI:49883"/>
    </cofactor>
    <text evidence="1">Binds 1 [4Fe-4S] cluster. The cluster is coordinated with 3 cysteines and an exchangeable S-adenosyl-L-methionine.</text>
</comment>
<comment type="cofactor">
    <cofactor evidence="1">
        <name>[2Fe-2S] cluster</name>
        <dbReference type="ChEBI" id="CHEBI:190135"/>
    </cofactor>
    <text evidence="1">Binds 1 [2Fe-2S] cluster. The cluster is coordinated with 3 cysteines and 1 arginine.</text>
</comment>
<comment type="pathway">
    <text evidence="1">Cofactor biosynthesis; biotin biosynthesis; biotin from 7,8-diaminononanoate: step 2/2.</text>
</comment>
<comment type="subunit">
    <text evidence="1">Homodimer.</text>
</comment>
<comment type="similarity">
    <text evidence="1">Belongs to the radical SAM superfamily. Biotin synthase family.</text>
</comment>
<gene>
    <name evidence="1" type="primary">bioB</name>
    <name type="ordered locus">XCC0388</name>
</gene>
<evidence type="ECO:0000255" key="1">
    <source>
        <dbReference type="HAMAP-Rule" id="MF_01694"/>
    </source>
</evidence>
<evidence type="ECO:0000255" key="2">
    <source>
        <dbReference type="PROSITE-ProRule" id="PRU01266"/>
    </source>
</evidence>